<proteinExistence type="inferred from homology"/>
<accession>B0KLX1</accession>
<feature type="signal peptide" evidence="1">
    <location>
        <begin position="1"/>
        <end position="21"/>
    </location>
</feature>
<feature type="chain" id="PRO_5000305254" description="Outer-membrane lipoprotein carrier protein">
    <location>
        <begin position="22"/>
        <end position="207"/>
    </location>
</feature>
<name>LOLA_PSEPG</name>
<organism>
    <name type="scientific">Pseudomonas putida (strain GB-1)</name>
    <dbReference type="NCBI Taxonomy" id="76869"/>
    <lineage>
        <taxon>Bacteria</taxon>
        <taxon>Pseudomonadati</taxon>
        <taxon>Pseudomonadota</taxon>
        <taxon>Gammaproteobacteria</taxon>
        <taxon>Pseudomonadales</taxon>
        <taxon>Pseudomonadaceae</taxon>
        <taxon>Pseudomonas</taxon>
    </lineage>
</organism>
<dbReference type="EMBL" id="CP000926">
    <property type="protein sequence ID" value="ABY99499.1"/>
    <property type="molecule type" value="Genomic_DNA"/>
</dbReference>
<dbReference type="RefSeq" id="WP_012273212.1">
    <property type="nucleotide sequence ID" value="NC_010322.1"/>
</dbReference>
<dbReference type="SMR" id="B0KLX1"/>
<dbReference type="KEGG" id="ppg:PputGB1_3608"/>
<dbReference type="eggNOG" id="COG2834">
    <property type="taxonomic scope" value="Bacteria"/>
</dbReference>
<dbReference type="HOGENOM" id="CLU_087560_0_0_6"/>
<dbReference type="Proteomes" id="UP000002157">
    <property type="component" value="Chromosome"/>
</dbReference>
<dbReference type="GO" id="GO:0030288">
    <property type="term" value="C:outer membrane-bounded periplasmic space"/>
    <property type="evidence" value="ECO:0007669"/>
    <property type="project" value="TreeGrafter"/>
</dbReference>
<dbReference type="GO" id="GO:0044874">
    <property type="term" value="P:lipoprotein localization to outer membrane"/>
    <property type="evidence" value="ECO:0007669"/>
    <property type="project" value="UniProtKB-UniRule"/>
</dbReference>
<dbReference type="GO" id="GO:0042953">
    <property type="term" value="P:lipoprotein transport"/>
    <property type="evidence" value="ECO:0007669"/>
    <property type="project" value="InterPro"/>
</dbReference>
<dbReference type="CDD" id="cd16325">
    <property type="entry name" value="LolA"/>
    <property type="match status" value="1"/>
</dbReference>
<dbReference type="Gene3D" id="2.50.20.10">
    <property type="entry name" value="Lipoprotein localisation LolA/LolB/LppX"/>
    <property type="match status" value="1"/>
</dbReference>
<dbReference type="HAMAP" id="MF_00240">
    <property type="entry name" value="LolA"/>
    <property type="match status" value="1"/>
</dbReference>
<dbReference type="InterPro" id="IPR029046">
    <property type="entry name" value="LolA/LolB/LppX"/>
</dbReference>
<dbReference type="InterPro" id="IPR004564">
    <property type="entry name" value="OM_lipoprot_carrier_LolA-like"/>
</dbReference>
<dbReference type="InterPro" id="IPR018323">
    <property type="entry name" value="OM_lipoprot_carrier_LolA_Pbac"/>
</dbReference>
<dbReference type="NCBIfam" id="TIGR00547">
    <property type="entry name" value="lolA"/>
    <property type="match status" value="1"/>
</dbReference>
<dbReference type="PANTHER" id="PTHR35869">
    <property type="entry name" value="OUTER-MEMBRANE LIPOPROTEIN CARRIER PROTEIN"/>
    <property type="match status" value="1"/>
</dbReference>
<dbReference type="PANTHER" id="PTHR35869:SF1">
    <property type="entry name" value="OUTER-MEMBRANE LIPOPROTEIN CARRIER PROTEIN"/>
    <property type="match status" value="1"/>
</dbReference>
<dbReference type="Pfam" id="PF03548">
    <property type="entry name" value="LolA"/>
    <property type="match status" value="1"/>
</dbReference>
<dbReference type="SUPFAM" id="SSF89392">
    <property type="entry name" value="Prokaryotic lipoproteins and lipoprotein localization factors"/>
    <property type="match status" value="1"/>
</dbReference>
<reference key="1">
    <citation type="submission" date="2008-01" db="EMBL/GenBank/DDBJ databases">
        <title>Complete sequence of Pseudomonas putida GB-1.</title>
        <authorList>
            <consortium name="US DOE Joint Genome Institute"/>
            <person name="Copeland A."/>
            <person name="Lucas S."/>
            <person name="Lapidus A."/>
            <person name="Barry K."/>
            <person name="Glavina del Rio T."/>
            <person name="Dalin E."/>
            <person name="Tice H."/>
            <person name="Pitluck S."/>
            <person name="Bruce D."/>
            <person name="Goodwin L."/>
            <person name="Chertkov O."/>
            <person name="Brettin T."/>
            <person name="Detter J.C."/>
            <person name="Han C."/>
            <person name="Kuske C.R."/>
            <person name="Schmutz J."/>
            <person name="Larimer F."/>
            <person name="Land M."/>
            <person name="Hauser L."/>
            <person name="Kyrpides N."/>
            <person name="Kim E."/>
            <person name="McCarthy J.K."/>
            <person name="Richardson P."/>
        </authorList>
    </citation>
    <scope>NUCLEOTIDE SEQUENCE [LARGE SCALE GENOMIC DNA]</scope>
    <source>
        <strain>GB-1</strain>
    </source>
</reference>
<sequence length="207" mass="22849">MRAIRMLLVSALALGTVTAYAGEQDVQRLTQLLEKSQTIEANFSQLTLGADGTSLQETSGKMTVKRPGLFYWHTDAPQEQVVVSDGKNVTLWDPDLEQATIKKLDVRLNQTPALLLSGDVSKISQSFDIASKEQGEVMDFTLKPKTKDTLFDSLRVSFRKGLINDMQLIDSVGQRTNILFNGVKANQAVPDSKFTFDIPKGADVIKE</sequence>
<evidence type="ECO:0000255" key="1">
    <source>
        <dbReference type="HAMAP-Rule" id="MF_00240"/>
    </source>
</evidence>
<comment type="function">
    <text evidence="1">Participates in the translocation of lipoproteins from the inner membrane to the outer membrane. Only forms a complex with a lipoprotein if the residue after the N-terminal Cys is not an aspartate (The Asp acts as a targeting signal to indicate that the lipoprotein should stay in the inner membrane).</text>
</comment>
<comment type="subunit">
    <text evidence="1">Monomer.</text>
</comment>
<comment type="subcellular location">
    <subcellularLocation>
        <location evidence="1">Periplasm</location>
    </subcellularLocation>
</comment>
<comment type="similarity">
    <text evidence="1">Belongs to the LolA family.</text>
</comment>
<keyword id="KW-0143">Chaperone</keyword>
<keyword id="KW-0574">Periplasm</keyword>
<keyword id="KW-0653">Protein transport</keyword>
<keyword id="KW-0732">Signal</keyword>
<keyword id="KW-0813">Transport</keyword>
<gene>
    <name evidence="1" type="primary">lolA</name>
    <name type="ordered locus">PputGB1_3608</name>
</gene>
<protein>
    <recommendedName>
        <fullName evidence="1">Outer-membrane lipoprotein carrier protein</fullName>
    </recommendedName>
</protein>